<gene>
    <name evidence="1" type="primary">mshA</name>
    <name type="ordered locus">jk1914</name>
</gene>
<reference key="1">
    <citation type="journal article" date="2005" name="J. Bacteriol.">
        <title>Complete genome sequence and analysis of the multiresistant nosocomial pathogen Corynebacterium jeikeium K411, a lipid-requiring bacterium of the human skin flora.</title>
        <authorList>
            <person name="Tauch A."/>
            <person name="Kaiser O."/>
            <person name="Hain T."/>
            <person name="Goesmann A."/>
            <person name="Weisshaar B."/>
            <person name="Albersmeier A."/>
            <person name="Bekel T."/>
            <person name="Bischoff N."/>
            <person name="Brune I."/>
            <person name="Chakraborty T."/>
            <person name="Kalinowski J."/>
            <person name="Meyer F."/>
            <person name="Rupp O."/>
            <person name="Schneiker S."/>
            <person name="Viehoever P."/>
            <person name="Puehler A."/>
        </authorList>
    </citation>
    <scope>NUCLEOTIDE SEQUENCE [LARGE SCALE GENOMIC DNA]</scope>
    <source>
        <strain>K411</strain>
    </source>
</reference>
<accession>Q4JSW2</accession>
<dbReference type="EC" id="2.4.1.250" evidence="1"/>
<dbReference type="EMBL" id="CR931997">
    <property type="protein sequence ID" value="CAI38095.1"/>
    <property type="molecule type" value="Genomic_DNA"/>
</dbReference>
<dbReference type="RefSeq" id="WP_005292156.1">
    <property type="nucleotide sequence ID" value="NC_007164.1"/>
</dbReference>
<dbReference type="SMR" id="Q4JSW2"/>
<dbReference type="STRING" id="306537.jk1914"/>
<dbReference type="CAZy" id="GT4">
    <property type="family name" value="Glycosyltransferase Family 4"/>
</dbReference>
<dbReference type="GeneID" id="92739543"/>
<dbReference type="KEGG" id="cjk:jk1914"/>
<dbReference type="eggNOG" id="COG0438">
    <property type="taxonomic scope" value="Bacteria"/>
</dbReference>
<dbReference type="HOGENOM" id="CLU_009583_2_3_11"/>
<dbReference type="OrthoDB" id="9810929at2"/>
<dbReference type="Proteomes" id="UP000000545">
    <property type="component" value="Chromosome"/>
</dbReference>
<dbReference type="GO" id="GO:0008375">
    <property type="term" value="F:acetylglucosaminyltransferase activity"/>
    <property type="evidence" value="ECO:0007669"/>
    <property type="project" value="UniProtKB-UniRule"/>
</dbReference>
<dbReference type="GO" id="GO:0102710">
    <property type="term" value="F:D-inositol-3-phosphate glycosyltransferase activity"/>
    <property type="evidence" value="ECO:0007669"/>
    <property type="project" value="UniProtKB-EC"/>
</dbReference>
<dbReference type="GO" id="GO:0000287">
    <property type="term" value="F:magnesium ion binding"/>
    <property type="evidence" value="ECO:0007669"/>
    <property type="project" value="UniProtKB-UniRule"/>
</dbReference>
<dbReference type="GO" id="GO:0010125">
    <property type="term" value="P:mycothiol biosynthetic process"/>
    <property type="evidence" value="ECO:0007669"/>
    <property type="project" value="UniProtKB-UniRule"/>
</dbReference>
<dbReference type="CDD" id="cd03800">
    <property type="entry name" value="GT4_sucrose_synthase"/>
    <property type="match status" value="1"/>
</dbReference>
<dbReference type="Gene3D" id="3.40.50.2000">
    <property type="entry name" value="Glycogen Phosphorylase B"/>
    <property type="match status" value="2"/>
</dbReference>
<dbReference type="HAMAP" id="MF_01695">
    <property type="entry name" value="MshA"/>
    <property type="match status" value="1"/>
</dbReference>
<dbReference type="InterPro" id="IPR001296">
    <property type="entry name" value="Glyco_trans_1"/>
</dbReference>
<dbReference type="InterPro" id="IPR028098">
    <property type="entry name" value="Glyco_trans_4-like_N"/>
</dbReference>
<dbReference type="InterPro" id="IPR017814">
    <property type="entry name" value="Mycothiol_biosynthesis_MshA"/>
</dbReference>
<dbReference type="NCBIfam" id="TIGR03449">
    <property type="entry name" value="mycothiol_MshA"/>
    <property type="match status" value="1"/>
</dbReference>
<dbReference type="PANTHER" id="PTHR12526:SF510">
    <property type="entry name" value="D-INOSITOL 3-PHOSPHATE GLYCOSYLTRANSFERASE"/>
    <property type="match status" value="1"/>
</dbReference>
<dbReference type="PANTHER" id="PTHR12526">
    <property type="entry name" value="GLYCOSYLTRANSFERASE"/>
    <property type="match status" value="1"/>
</dbReference>
<dbReference type="Pfam" id="PF13579">
    <property type="entry name" value="Glyco_trans_4_4"/>
    <property type="match status" value="1"/>
</dbReference>
<dbReference type="Pfam" id="PF00534">
    <property type="entry name" value="Glycos_transf_1"/>
    <property type="match status" value="1"/>
</dbReference>
<dbReference type="SUPFAM" id="SSF53756">
    <property type="entry name" value="UDP-Glycosyltransferase/glycogen phosphorylase"/>
    <property type="match status" value="1"/>
</dbReference>
<keyword id="KW-0328">Glycosyltransferase</keyword>
<keyword id="KW-0460">Magnesium</keyword>
<keyword id="KW-0479">Metal-binding</keyword>
<keyword id="KW-1185">Reference proteome</keyword>
<keyword id="KW-0808">Transferase</keyword>
<name>MSHA_CORJK</name>
<proteinExistence type="inferred from homology"/>
<organism>
    <name type="scientific">Corynebacterium jeikeium (strain K411)</name>
    <dbReference type="NCBI Taxonomy" id="306537"/>
    <lineage>
        <taxon>Bacteria</taxon>
        <taxon>Bacillati</taxon>
        <taxon>Actinomycetota</taxon>
        <taxon>Actinomycetes</taxon>
        <taxon>Mycobacteriales</taxon>
        <taxon>Corynebacteriaceae</taxon>
        <taxon>Corynebacterium</taxon>
    </lineage>
</organism>
<comment type="function">
    <text evidence="1">Catalyzes the transfer of a N-acetyl-glucosamine moiety to 1D-myo-inositol 3-phosphate to produce 1D-myo-inositol 2-acetamido-2-deoxy-glucopyranoside 3-phosphate in the mycothiol biosynthesis pathway.</text>
</comment>
<comment type="catalytic activity">
    <reaction evidence="1">
        <text>1D-myo-inositol 3-phosphate + UDP-N-acetyl-alpha-D-glucosamine = 1D-myo-inositol 2-acetamido-2-deoxy-alpha-D-glucopyranoside 3-phosphate + UDP + H(+)</text>
        <dbReference type="Rhea" id="RHEA:26188"/>
        <dbReference type="ChEBI" id="CHEBI:15378"/>
        <dbReference type="ChEBI" id="CHEBI:57705"/>
        <dbReference type="ChEBI" id="CHEBI:58223"/>
        <dbReference type="ChEBI" id="CHEBI:58401"/>
        <dbReference type="ChEBI" id="CHEBI:58892"/>
        <dbReference type="EC" id="2.4.1.250"/>
    </reaction>
</comment>
<comment type="subunit">
    <text evidence="1">Homodimer.</text>
</comment>
<comment type="similarity">
    <text evidence="1">Belongs to the glycosyltransferase group 1 family. MshA subfamily.</text>
</comment>
<protein>
    <recommendedName>
        <fullName>D-inositol 3-phosphate glycosyltransferase</fullName>
        <ecNumber evidence="1">2.4.1.250</ecNumber>
    </recommendedName>
    <alternativeName>
        <fullName evidence="1">N-acetylglucosamine-inositol-phosphate N-acetylglucosaminyltransferase</fullName>
        <shortName evidence="1">GlcNAc-Ins-P N-acetylglucosaminyltransferase</shortName>
    </alternativeName>
</protein>
<feature type="chain" id="PRO_0000400119" description="D-inositol 3-phosphate glycosyltransferase">
    <location>
        <begin position="1"/>
        <end position="419"/>
    </location>
</feature>
<feature type="binding site" evidence="1">
    <location>
        <position position="9"/>
    </location>
    <ligand>
        <name>1D-myo-inositol 3-phosphate</name>
        <dbReference type="ChEBI" id="CHEBI:58401"/>
    </ligand>
</feature>
<feature type="binding site" evidence="1">
    <location>
        <begin position="15"/>
        <end position="16"/>
    </location>
    <ligand>
        <name>UDP-N-acetyl-alpha-D-glucosamine</name>
        <dbReference type="ChEBI" id="CHEBI:57705"/>
    </ligand>
</feature>
<feature type="binding site" evidence="1">
    <location>
        <begin position="20"/>
        <end position="25"/>
    </location>
    <ligand>
        <name>1D-myo-inositol 3-phosphate</name>
        <dbReference type="ChEBI" id="CHEBI:58401"/>
    </ligand>
</feature>
<feature type="binding site" evidence="1">
    <location>
        <position position="23"/>
    </location>
    <ligand>
        <name>UDP-N-acetyl-alpha-D-glucosamine</name>
        <dbReference type="ChEBI" id="CHEBI:57705"/>
    </ligand>
</feature>
<feature type="binding site" evidence="1">
    <location>
        <position position="78"/>
    </location>
    <ligand>
        <name>1D-myo-inositol 3-phosphate</name>
        <dbReference type="ChEBI" id="CHEBI:58401"/>
    </ligand>
</feature>
<feature type="binding site" evidence="1">
    <location>
        <position position="110"/>
    </location>
    <ligand>
        <name>1D-myo-inositol 3-phosphate</name>
        <dbReference type="ChEBI" id="CHEBI:58401"/>
    </ligand>
</feature>
<feature type="binding site" evidence="1">
    <location>
        <position position="134"/>
    </location>
    <ligand>
        <name>1D-myo-inositol 3-phosphate</name>
        <dbReference type="ChEBI" id="CHEBI:58401"/>
    </ligand>
</feature>
<feature type="binding site" evidence="1">
    <location>
        <position position="154"/>
    </location>
    <ligand>
        <name>1D-myo-inositol 3-phosphate</name>
        <dbReference type="ChEBI" id="CHEBI:58401"/>
    </ligand>
</feature>
<feature type="binding site" evidence="1">
    <location>
        <position position="231"/>
    </location>
    <ligand>
        <name>UDP-N-acetyl-alpha-D-glucosamine</name>
        <dbReference type="ChEBI" id="CHEBI:57705"/>
    </ligand>
</feature>
<feature type="binding site" evidence="1">
    <location>
        <position position="236"/>
    </location>
    <ligand>
        <name>UDP-N-acetyl-alpha-D-glucosamine</name>
        <dbReference type="ChEBI" id="CHEBI:57705"/>
    </ligand>
</feature>
<feature type="binding site" evidence="1">
    <location>
        <position position="295"/>
    </location>
    <ligand>
        <name>UDP-N-acetyl-alpha-D-glucosamine</name>
        <dbReference type="ChEBI" id="CHEBI:57705"/>
    </ligand>
</feature>
<feature type="binding site" evidence="1">
    <location>
        <position position="304"/>
    </location>
    <ligand>
        <name>Mg(2+)</name>
        <dbReference type="ChEBI" id="CHEBI:18420"/>
    </ligand>
</feature>
<feature type="binding site" evidence="1">
    <location>
        <position position="305"/>
    </location>
    <ligand>
        <name>Mg(2+)</name>
        <dbReference type="ChEBI" id="CHEBI:18420"/>
    </ligand>
</feature>
<feature type="binding site" evidence="1">
    <location>
        <position position="307"/>
    </location>
    <ligand>
        <name>Mg(2+)</name>
        <dbReference type="ChEBI" id="CHEBI:18420"/>
    </ligand>
</feature>
<feature type="binding site" evidence="1">
    <location>
        <position position="317"/>
    </location>
    <ligand>
        <name>UDP-N-acetyl-alpha-D-glucosamine</name>
        <dbReference type="ChEBI" id="CHEBI:57705"/>
    </ligand>
</feature>
<feature type="binding site" evidence="1">
    <location>
        <position position="325"/>
    </location>
    <ligand>
        <name>UDP-N-acetyl-alpha-D-glucosamine</name>
        <dbReference type="ChEBI" id="CHEBI:57705"/>
    </ligand>
</feature>
<feature type="binding site" evidence="1">
    <location>
        <position position="331"/>
    </location>
    <ligand>
        <name>Mg(2+)</name>
        <dbReference type="ChEBI" id="CHEBI:18420"/>
    </ligand>
</feature>
<sequence length="419" mass="45423">MRVAMISMHTSPLEQPGTGDAGGMNVYVKNIAEQLERRGVIVDVFTRATRPLQGEVVNVRPGLRVINCVAGPYEGLSKEELPTQLAAFTGSILAFCREEGVSYDLIHSHYWLSGQVGWLLRDLWQVPWVHTAHTLAAVKNNSLADGDSREPESRRICEQQIVDNADLLIVNTDQEVQDLIEGYDATTCAIRVVPPGADVDRFTPGSDRATERSRRELGIPFRTKVIGFVGRLQRLKGPQVLLRAVAELLDRHPQQQLAVVICGGSSGAGGNELERLQLLAEELGISRCVRFLAPRPPEELVGVYRAADIVAVPSYNESFGLVALEAQACGTPVVATRTGGLPIAVDGGKSGLLVDGHDPSDWADALGKLVLDDDLRIAMGEYAPSHAAKFSWQASAEALHKLYEELPPAGHRGERQPAG</sequence>
<evidence type="ECO:0000255" key="1">
    <source>
        <dbReference type="HAMAP-Rule" id="MF_01695"/>
    </source>
</evidence>